<proteinExistence type="evidence at protein level"/>
<dbReference type="EC" id="3.1.11.2" evidence="2"/>
<dbReference type="EMBL" id="AB072498">
    <property type="protein sequence ID" value="BAB88654.1"/>
    <property type="molecule type" value="mRNA"/>
</dbReference>
<dbReference type="EMBL" id="AB085235">
    <property type="protein sequence ID" value="BAC11807.1"/>
    <property type="molecule type" value="Genomic_DNA"/>
</dbReference>
<dbReference type="EMBL" id="AK021248">
    <property type="protein sequence ID" value="BAB32346.1"/>
    <property type="molecule type" value="mRNA"/>
</dbReference>
<dbReference type="EMBL" id="AK040145">
    <property type="protein sequence ID" value="BAC30522.1"/>
    <property type="molecule type" value="mRNA"/>
</dbReference>
<dbReference type="EMBL" id="AK050858">
    <property type="protein sequence ID" value="BAC34436.1"/>
    <property type="molecule type" value="mRNA"/>
</dbReference>
<dbReference type="EMBL" id="AK080916">
    <property type="protein sequence ID" value="BAC38077.1"/>
    <property type="molecule type" value="mRNA"/>
</dbReference>
<dbReference type="EMBL" id="AK081677">
    <property type="protein sequence ID" value="BAC38287.1"/>
    <property type="molecule type" value="mRNA"/>
</dbReference>
<dbReference type="EMBL" id="AK088918">
    <property type="protein sequence ID" value="BAC40652.1"/>
    <property type="molecule type" value="mRNA"/>
</dbReference>
<dbReference type="EMBL" id="BC026769">
    <property type="protein sequence ID" value="AAH26769.1"/>
    <property type="molecule type" value="mRNA"/>
</dbReference>
<dbReference type="EMBL" id="BC078633">
    <property type="protein sequence ID" value="AAH78633.1"/>
    <property type="molecule type" value="mRNA"/>
</dbReference>
<dbReference type="CCDS" id="CCDS30463.1">
    <molecule id="Q68G58-1"/>
</dbReference>
<dbReference type="RefSeq" id="NP_084219.1">
    <property type="nucleotide sequence ID" value="NM_029943.2"/>
</dbReference>
<dbReference type="RefSeq" id="XP_011246180.1">
    <property type="nucleotide sequence ID" value="XM_011247878.2"/>
</dbReference>
<dbReference type="SMR" id="Q68G58"/>
<dbReference type="BioGRID" id="218805">
    <property type="interactions" value="4"/>
</dbReference>
<dbReference type="FunCoup" id="Q68G58">
    <property type="interactions" value="3530"/>
</dbReference>
<dbReference type="IntAct" id="Q68G58">
    <property type="interactions" value="1"/>
</dbReference>
<dbReference type="STRING" id="10090.ENSMUSP00000108340"/>
<dbReference type="iPTMnet" id="Q68G58"/>
<dbReference type="PhosphoSitePlus" id="Q68G58"/>
<dbReference type="PaxDb" id="10090-ENSMUSP00000108341"/>
<dbReference type="ProteomicsDB" id="281794">
    <molecule id="Q68G58-1"/>
</dbReference>
<dbReference type="ProteomicsDB" id="281795">
    <molecule id="Q68G58-2"/>
</dbReference>
<dbReference type="ProteomicsDB" id="281796">
    <molecule id="Q68G58-3"/>
</dbReference>
<dbReference type="ProteomicsDB" id="281797">
    <molecule id="Q68G58-4"/>
</dbReference>
<dbReference type="ProteomicsDB" id="281798">
    <molecule id="Q68G58-5"/>
</dbReference>
<dbReference type="Pumba" id="Q68G58"/>
<dbReference type="Antibodypedia" id="26902">
    <property type="antibodies" value="161 antibodies from 26 providers"/>
</dbReference>
<dbReference type="DNASU" id="77622"/>
<dbReference type="Ensembl" id="ENSMUST00000112725.8">
    <molecule id="Q68G58-5"/>
    <property type="protein sequence ID" value="ENSMUSP00000108345.2"/>
    <property type="gene ID" value="ENSMUSG00000025269.17"/>
</dbReference>
<dbReference type="Ensembl" id="ENSMUST00000112727.10">
    <molecule id="Q68G58-4"/>
    <property type="protein sequence ID" value="ENSMUSP00000108347.4"/>
    <property type="gene ID" value="ENSMUSG00000025269.17"/>
</dbReference>
<dbReference type="GeneID" id="77622"/>
<dbReference type="KEGG" id="mmu:77622"/>
<dbReference type="UCSC" id="uc009uoi.1">
    <molecule id="Q68G58-5"/>
    <property type="organism name" value="mouse"/>
</dbReference>
<dbReference type="AGR" id="MGI:1924872"/>
<dbReference type="CTD" id="27301"/>
<dbReference type="MGI" id="MGI:1924872">
    <property type="gene designation" value="Apex2"/>
</dbReference>
<dbReference type="VEuPathDB" id="HostDB:ENSMUSG00000025269"/>
<dbReference type="eggNOG" id="KOG1294">
    <property type="taxonomic scope" value="Eukaryota"/>
</dbReference>
<dbReference type="GeneTree" id="ENSGT00530000063540"/>
<dbReference type="InParanoid" id="Q68G58"/>
<dbReference type="BioGRID-ORCS" id="77622">
    <property type="hits" value="13 hits in 114 CRISPR screens"/>
</dbReference>
<dbReference type="ChiTaRS" id="Apex2">
    <property type="organism name" value="mouse"/>
</dbReference>
<dbReference type="PRO" id="PR:Q68G58"/>
<dbReference type="Proteomes" id="UP000000589">
    <property type="component" value="Chromosome X"/>
</dbReference>
<dbReference type="RNAct" id="Q68G58">
    <property type="molecule type" value="protein"/>
</dbReference>
<dbReference type="Bgee" id="ENSMUSG00000025269">
    <property type="expression patterns" value="Expressed in epiblast (generic) and 154 other cell types or tissues"/>
</dbReference>
<dbReference type="ExpressionAtlas" id="Q68G58">
    <property type="expression patterns" value="baseline and differential"/>
</dbReference>
<dbReference type="GO" id="GO:0005743">
    <property type="term" value="C:mitochondrial inner membrane"/>
    <property type="evidence" value="ECO:0000314"/>
    <property type="project" value="MGI"/>
</dbReference>
<dbReference type="GO" id="GO:0005739">
    <property type="term" value="C:mitochondrion"/>
    <property type="evidence" value="ECO:0007005"/>
    <property type="project" value="MGI"/>
</dbReference>
<dbReference type="GO" id="GO:0005634">
    <property type="term" value="C:nucleus"/>
    <property type="evidence" value="ECO:0000314"/>
    <property type="project" value="MGI"/>
</dbReference>
<dbReference type="GO" id="GO:0003677">
    <property type="term" value="F:DNA binding"/>
    <property type="evidence" value="ECO:0007669"/>
    <property type="project" value="UniProtKB-KW"/>
</dbReference>
<dbReference type="GO" id="GO:0004519">
    <property type="term" value="F:endonuclease activity"/>
    <property type="evidence" value="ECO:0007669"/>
    <property type="project" value="UniProtKB-KW"/>
</dbReference>
<dbReference type="GO" id="GO:0004527">
    <property type="term" value="F:exonuclease activity"/>
    <property type="evidence" value="ECO:0007669"/>
    <property type="project" value="UniProtKB-KW"/>
</dbReference>
<dbReference type="GO" id="GO:0008270">
    <property type="term" value="F:zinc ion binding"/>
    <property type="evidence" value="ECO:0007669"/>
    <property type="project" value="UniProtKB-KW"/>
</dbReference>
<dbReference type="GO" id="GO:0006310">
    <property type="term" value="P:DNA recombination"/>
    <property type="evidence" value="ECO:0007669"/>
    <property type="project" value="UniProtKB-KW"/>
</dbReference>
<dbReference type="GO" id="GO:0006281">
    <property type="term" value="P:DNA repair"/>
    <property type="evidence" value="ECO:0007669"/>
    <property type="project" value="UniProtKB-KW"/>
</dbReference>
<dbReference type="CDD" id="cd09088">
    <property type="entry name" value="Ape2-like_AP-endo"/>
    <property type="match status" value="1"/>
</dbReference>
<dbReference type="FunFam" id="3.60.10.10:FF:000030">
    <property type="entry name" value="DNA-(apurinic or apyrimidinic site) lyase"/>
    <property type="match status" value="1"/>
</dbReference>
<dbReference type="Gene3D" id="3.60.10.10">
    <property type="entry name" value="Endonuclease/exonuclease/phosphatase"/>
    <property type="match status" value="1"/>
</dbReference>
<dbReference type="InterPro" id="IPR004808">
    <property type="entry name" value="AP_endonuc_1"/>
</dbReference>
<dbReference type="InterPro" id="IPR020847">
    <property type="entry name" value="AP_endonuclease_F1_BS"/>
</dbReference>
<dbReference type="InterPro" id="IPR036691">
    <property type="entry name" value="Endo/exonu/phosph_ase_sf"/>
</dbReference>
<dbReference type="InterPro" id="IPR005135">
    <property type="entry name" value="Endo/exonuclease/phosphatase"/>
</dbReference>
<dbReference type="InterPro" id="IPR010666">
    <property type="entry name" value="Znf_GRF"/>
</dbReference>
<dbReference type="NCBIfam" id="TIGR00633">
    <property type="entry name" value="xth"/>
    <property type="match status" value="1"/>
</dbReference>
<dbReference type="PANTHER" id="PTHR22748">
    <property type="entry name" value="AP ENDONUCLEASE"/>
    <property type="match status" value="1"/>
</dbReference>
<dbReference type="PANTHER" id="PTHR22748:SF27">
    <property type="entry name" value="DNA-(APURINIC OR APYRIMIDINIC SITE) ENDONUCLEASE 2"/>
    <property type="match status" value="1"/>
</dbReference>
<dbReference type="Pfam" id="PF03372">
    <property type="entry name" value="Exo_endo_phos"/>
    <property type="match status" value="1"/>
</dbReference>
<dbReference type="Pfam" id="PF06839">
    <property type="entry name" value="Zn_ribbon_GRF"/>
    <property type="match status" value="1"/>
</dbReference>
<dbReference type="SUPFAM" id="SSF56219">
    <property type="entry name" value="DNase I-like"/>
    <property type="match status" value="1"/>
</dbReference>
<dbReference type="PROSITE" id="PS00726">
    <property type="entry name" value="AP_NUCLEASE_F1_1"/>
    <property type="match status" value="1"/>
</dbReference>
<dbReference type="PROSITE" id="PS51435">
    <property type="entry name" value="AP_NUCLEASE_F1_4"/>
    <property type="match status" value="1"/>
</dbReference>
<dbReference type="PROSITE" id="PS51999">
    <property type="entry name" value="ZF_GRF"/>
    <property type="match status" value="1"/>
</dbReference>
<gene>
    <name type="primary">Apex2</name>
    <name type="synonym">Ape2</name>
</gene>
<accession>Q68G58</accession>
<accession>Q8BJP7</accession>
<accession>Q8BTR7</accession>
<accession>Q8BUZ2</accession>
<accession>Q8BYE9</accession>
<accession>Q8R018</accession>
<accession>Q8R328</accession>
<accession>Q9CS12</accession>
<name>APEX2_MOUSE</name>
<protein>
    <recommendedName>
        <fullName>DNA-(apurinic or apyrimidinic site) endonuclease 2</fullName>
        <ecNumber evidence="2">3.1.11.2</ecNumber>
    </recommendedName>
    <alternativeName>
        <fullName>APEX nuclease 2</fullName>
    </alternativeName>
    <alternativeName>
        <fullName>Apurinic-apyrimidinic endonuclease 2</fullName>
        <shortName>AP endonuclease 2</shortName>
    </alternativeName>
</protein>
<reference key="1">
    <citation type="journal article" date="2003" name="Genomics">
        <title>Characterization of the genomic structure and expression of the mouse Apex2 gene.</title>
        <authorList>
            <person name="Ide Y."/>
            <person name="Tsuchimoto D."/>
            <person name="Tominaga Y."/>
            <person name="Iwamoto Y."/>
            <person name="Nakabeppu Y."/>
        </authorList>
    </citation>
    <scope>NUCLEOTIDE SEQUENCE [GENOMIC DNA / MRNA] (ISOFORM 1)</scope>
    <scope>INTERACTION WITH PCNA</scope>
    <scope>SUBCELLULAR LOCATION</scope>
    <scope>TISSUE SPECIFICITY</scope>
    <source>
        <strain>129/Sv</strain>
        <strain>C57BL/6J</strain>
        <tissue>B-cell</tissue>
    </source>
</reference>
<reference key="2">
    <citation type="journal article" date="2005" name="Science">
        <title>The transcriptional landscape of the mammalian genome.</title>
        <authorList>
            <person name="Carninci P."/>
            <person name="Kasukawa T."/>
            <person name="Katayama S."/>
            <person name="Gough J."/>
            <person name="Frith M.C."/>
            <person name="Maeda N."/>
            <person name="Oyama R."/>
            <person name="Ravasi T."/>
            <person name="Lenhard B."/>
            <person name="Wells C."/>
            <person name="Kodzius R."/>
            <person name="Shimokawa K."/>
            <person name="Bajic V.B."/>
            <person name="Brenner S.E."/>
            <person name="Batalov S."/>
            <person name="Forrest A.R."/>
            <person name="Zavolan M."/>
            <person name="Davis M.J."/>
            <person name="Wilming L.G."/>
            <person name="Aidinis V."/>
            <person name="Allen J.E."/>
            <person name="Ambesi-Impiombato A."/>
            <person name="Apweiler R."/>
            <person name="Aturaliya R.N."/>
            <person name="Bailey T.L."/>
            <person name="Bansal M."/>
            <person name="Baxter L."/>
            <person name="Beisel K.W."/>
            <person name="Bersano T."/>
            <person name="Bono H."/>
            <person name="Chalk A.M."/>
            <person name="Chiu K.P."/>
            <person name="Choudhary V."/>
            <person name="Christoffels A."/>
            <person name="Clutterbuck D.R."/>
            <person name="Crowe M.L."/>
            <person name="Dalla E."/>
            <person name="Dalrymple B.P."/>
            <person name="de Bono B."/>
            <person name="Della Gatta G."/>
            <person name="di Bernardo D."/>
            <person name="Down T."/>
            <person name="Engstrom P."/>
            <person name="Fagiolini M."/>
            <person name="Faulkner G."/>
            <person name="Fletcher C.F."/>
            <person name="Fukushima T."/>
            <person name="Furuno M."/>
            <person name="Futaki S."/>
            <person name="Gariboldi M."/>
            <person name="Georgii-Hemming P."/>
            <person name="Gingeras T.R."/>
            <person name="Gojobori T."/>
            <person name="Green R.E."/>
            <person name="Gustincich S."/>
            <person name="Harbers M."/>
            <person name="Hayashi Y."/>
            <person name="Hensch T.K."/>
            <person name="Hirokawa N."/>
            <person name="Hill D."/>
            <person name="Huminiecki L."/>
            <person name="Iacono M."/>
            <person name="Ikeo K."/>
            <person name="Iwama A."/>
            <person name="Ishikawa T."/>
            <person name="Jakt M."/>
            <person name="Kanapin A."/>
            <person name="Katoh M."/>
            <person name="Kawasawa Y."/>
            <person name="Kelso J."/>
            <person name="Kitamura H."/>
            <person name="Kitano H."/>
            <person name="Kollias G."/>
            <person name="Krishnan S.P."/>
            <person name="Kruger A."/>
            <person name="Kummerfeld S.K."/>
            <person name="Kurochkin I.V."/>
            <person name="Lareau L.F."/>
            <person name="Lazarevic D."/>
            <person name="Lipovich L."/>
            <person name="Liu J."/>
            <person name="Liuni S."/>
            <person name="McWilliam S."/>
            <person name="Madan Babu M."/>
            <person name="Madera M."/>
            <person name="Marchionni L."/>
            <person name="Matsuda H."/>
            <person name="Matsuzawa S."/>
            <person name="Miki H."/>
            <person name="Mignone F."/>
            <person name="Miyake S."/>
            <person name="Morris K."/>
            <person name="Mottagui-Tabar S."/>
            <person name="Mulder N."/>
            <person name="Nakano N."/>
            <person name="Nakauchi H."/>
            <person name="Ng P."/>
            <person name="Nilsson R."/>
            <person name="Nishiguchi S."/>
            <person name="Nishikawa S."/>
            <person name="Nori F."/>
            <person name="Ohara O."/>
            <person name="Okazaki Y."/>
            <person name="Orlando V."/>
            <person name="Pang K.C."/>
            <person name="Pavan W.J."/>
            <person name="Pavesi G."/>
            <person name="Pesole G."/>
            <person name="Petrovsky N."/>
            <person name="Piazza S."/>
            <person name="Reed J."/>
            <person name="Reid J.F."/>
            <person name="Ring B.Z."/>
            <person name="Ringwald M."/>
            <person name="Rost B."/>
            <person name="Ruan Y."/>
            <person name="Salzberg S.L."/>
            <person name="Sandelin A."/>
            <person name="Schneider C."/>
            <person name="Schoenbach C."/>
            <person name="Sekiguchi K."/>
            <person name="Semple C.A."/>
            <person name="Seno S."/>
            <person name="Sessa L."/>
            <person name="Sheng Y."/>
            <person name="Shibata Y."/>
            <person name="Shimada H."/>
            <person name="Shimada K."/>
            <person name="Silva D."/>
            <person name="Sinclair B."/>
            <person name="Sperling S."/>
            <person name="Stupka E."/>
            <person name="Sugiura K."/>
            <person name="Sultana R."/>
            <person name="Takenaka Y."/>
            <person name="Taki K."/>
            <person name="Tammoja K."/>
            <person name="Tan S.L."/>
            <person name="Tang S."/>
            <person name="Taylor M.S."/>
            <person name="Tegner J."/>
            <person name="Teichmann S.A."/>
            <person name="Ueda H.R."/>
            <person name="van Nimwegen E."/>
            <person name="Verardo R."/>
            <person name="Wei C.L."/>
            <person name="Yagi K."/>
            <person name="Yamanishi H."/>
            <person name="Zabarovsky E."/>
            <person name="Zhu S."/>
            <person name="Zimmer A."/>
            <person name="Hide W."/>
            <person name="Bult C."/>
            <person name="Grimmond S.M."/>
            <person name="Teasdale R.D."/>
            <person name="Liu E.T."/>
            <person name="Brusic V."/>
            <person name="Quackenbush J."/>
            <person name="Wahlestedt C."/>
            <person name="Mattick J.S."/>
            <person name="Hume D.A."/>
            <person name="Kai C."/>
            <person name="Sasaki D."/>
            <person name="Tomaru Y."/>
            <person name="Fukuda S."/>
            <person name="Kanamori-Katayama M."/>
            <person name="Suzuki M."/>
            <person name="Aoki J."/>
            <person name="Arakawa T."/>
            <person name="Iida J."/>
            <person name="Imamura K."/>
            <person name="Itoh M."/>
            <person name="Kato T."/>
            <person name="Kawaji H."/>
            <person name="Kawagashira N."/>
            <person name="Kawashima T."/>
            <person name="Kojima M."/>
            <person name="Kondo S."/>
            <person name="Konno H."/>
            <person name="Nakano K."/>
            <person name="Ninomiya N."/>
            <person name="Nishio T."/>
            <person name="Okada M."/>
            <person name="Plessy C."/>
            <person name="Shibata K."/>
            <person name="Shiraki T."/>
            <person name="Suzuki S."/>
            <person name="Tagami M."/>
            <person name="Waki K."/>
            <person name="Watahiki A."/>
            <person name="Okamura-Oho Y."/>
            <person name="Suzuki H."/>
            <person name="Kawai J."/>
            <person name="Hayashizaki Y."/>
        </authorList>
    </citation>
    <scope>NUCLEOTIDE SEQUENCE [LARGE SCALE MRNA] (ISOFORMS 1/2/4/5)</scope>
    <source>
        <strain>NOD</strain>
        <tissue>Adipose tissue</tissue>
        <tissue>Head</tissue>
        <tissue>Thymus</tissue>
    </source>
</reference>
<reference key="3">
    <citation type="journal article" date="2004" name="Genome Res.">
        <title>The status, quality, and expansion of the NIH full-length cDNA project: the Mammalian Gene Collection (MGC).</title>
        <authorList>
            <consortium name="The MGC Project Team"/>
        </authorList>
    </citation>
    <scope>NUCLEOTIDE SEQUENCE [LARGE SCALE MRNA] (ISOFORMS 1 AND 3)</scope>
    <source>
        <strain>FVB/N-3</strain>
        <tissue>Mammary tumor</tissue>
    </source>
</reference>
<reference key="4">
    <citation type="journal article" date="2004" name="Blood">
        <title>Growth retardation and dyslymphopoiesis accompanied by G2/M arrest in APEX2-null mice.</title>
        <authorList>
            <person name="Ide Y."/>
            <person name="Tsuchimoto D."/>
            <person name="Tominaga Y."/>
            <person name="Nakashima M."/>
            <person name="Watanabe T."/>
            <person name="Sakumi K."/>
            <person name="Ohno M."/>
            <person name="Nakabeppu Y."/>
        </authorList>
    </citation>
    <scope>FUNCTION</scope>
    <scope>DISRUPTION PHENOTYPE</scope>
    <scope>TISSUE SPECIFICITY</scope>
</reference>
<reference key="5">
    <citation type="journal article" date="2007" name="J. Exp. Med.">
        <title>APE1- and APE2-dependent DNA breaks in immunoglobulin class switch recombination.</title>
        <authorList>
            <person name="Guikema J.E."/>
            <person name="Linehan E.K."/>
            <person name="Tsuchimoto D."/>
            <person name="Nakabeppu Y."/>
            <person name="Strauss P.R."/>
            <person name="Stavnezer J."/>
            <person name="Schrader C.E."/>
        </authorList>
    </citation>
    <scope>FUNCTION</scope>
    <scope>INDUCTION</scope>
    <scope>DISRUPTION PHENOTYPE</scope>
    <scope>SUBCELLULAR LOCATION</scope>
</reference>
<reference key="6">
    <citation type="journal article" date="2009" name="Int. Immunol.">
        <title>Apex2 is required for efficient somatic hypermutation but not for class switch recombination of immunoglobulin genes.</title>
        <authorList>
            <person name="Sabouri Z."/>
            <person name="Okazaki I.M."/>
            <person name="Shinkura R."/>
            <person name="Begum N."/>
            <person name="Nagaoka H."/>
            <person name="Tsuchimoto D."/>
            <person name="Nakabeppu Y."/>
            <person name="Honjo T."/>
        </authorList>
    </citation>
    <scope>FUNCTION</scope>
</reference>
<keyword id="KW-0025">Alternative splicing</keyword>
<keyword id="KW-0131">Cell cycle</keyword>
<keyword id="KW-0963">Cytoplasm</keyword>
<keyword id="KW-0227">DNA damage</keyword>
<keyword id="KW-0233">DNA recombination</keyword>
<keyword id="KW-0234">DNA repair</keyword>
<keyword id="KW-0238">DNA-binding</keyword>
<keyword id="KW-0255">Endonuclease</keyword>
<keyword id="KW-0269">Exonuclease</keyword>
<keyword id="KW-0378">Hydrolase</keyword>
<keyword id="KW-1017">Isopeptide bond</keyword>
<keyword id="KW-0460">Magnesium</keyword>
<keyword id="KW-0479">Metal-binding</keyword>
<keyword id="KW-0496">Mitochondrion</keyword>
<keyword id="KW-0540">Nuclease</keyword>
<keyword id="KW-0539">Nucleus</keyword>
<keyword id="KW-1185">Reference proteome</keyword>
<keyword id="KW-0832">Ubl conjugation</keyword>
<keyword id="KW-0862">Zinc</keyword>
<keyword id="KW-0863">Zinc-finger</keyword>
<evidence type="ECO:0000250" key="1">
    <source>
        <dbReference type="UniProtKB" id="P27695"/>
    </source>
</evidence>
<evidence type="ECO:0000250" key="2">
    <source>
        <dbReference type="UniProtKB" id="Q9UBZ4"/>
    </source>
</evidence>
<evidence type="ECO:0000255" key="3">
    <source>
        <dbReference type="PROSITE-ProRule" id="PRU00764"/>
    </source>
</evidence>
<evidence type="ECO:0000255" key="4">
    <source>
        <dbReference type="PROSITE-ProRule" id="PRU01343"/>
    </source>
</evidence>
<evidence type="ECO:0000256" key="5">
    <source>
        <dbReference type="SAM" id="MobiDB-lite"/>
    </source>
</evidence>
<evidence type="ECO:0000269" key="6">
    <source>
    </source>
</evidence>
<evidence type="ECO:0000269" key="7">
    <source>
    </source>
</evidence>
<evidence type="ECO:0000269" key="8">
    <source>
    </source>
</evidence>
<evidence type="ECO:0000269" key="9">
    <source>
    </source>
</evidence>
<evidence type="ECO:0000303" key="10">
    <source>
    </source>
</evidence>
<evidence type="ECO:0000305" key="11"/>
<organism>
    <name type="scientific">Mus musculus</name>
    <name type="common">Mouse</name>
    <dbReference type="NCBI Taxonomy" id="10090"/>
    <lineage>
        <taxon>Eukaryota</taxon>
        <taxon>Metazoa</taxon>
        <taxon>Chordata</taxon>
        <taxon>Craniata</taxon>
        <taxon>Vertebrata</taxon>
        <taxon>Euteleostomi</taxon>
        <taxon>Mammalia</taxon>
        <taxon>Eutheria</taxon>
        <taxon>Euarchontoglires</taxon>
        <taxon>Glires</taxon>
        <taxon>Rodentia</taxon>
        <taxon>Myomorpha</taxon>
        <taxon>Muroidea</taxon>
        <taxon>Muridae</taxon>
        <taxon>Murinae</taxon>
        <taxon>Mus</taxon>
        <taxon>Mus</taxon>
    </lineage>
</organism>
<feature type="chain" id="PRO_0000200015" description="DNA-(apurinic or apyrimidinic site) endonuclease 2">
    <location>
        <begin position="1"/>
        <end position="516"/>
    </location>
</feature>
<feature type="zinc finger region" description="GRF-type" evidence="4">
    <location>
        <begin position="467"/>
        <end position="516"/>
    </location>
</feature>
<feature type="region of interest" description="Disordered" evidence="5">
    <location>
        <begin position="357"/>
        <end position="389"/>
    </location>
</feature>
<feature type="region of interest" description="Required for the interaction and colocalization with PCNA in nuclear foci in presence of oxidative-induced DNA damaging agents" evidence="2">
    <location>
        <begin position="389"/>
        <end position="396"/>
    </location>
</feature>
<feature type="compositionally biased region" description="Polar residues" evidence="5">
    <location>
        <begin position="357"/>
        <end position="366"/>
    </location>
</feature>
<feature type="compositionally biased region" description="Basic residues" evidence="5">
    <location>
        <begin position="367"/>
        <end position="389"/>
    </location>
</feature>
<feature type="active site" evidence="1">
    <location>
        <position position="155"/>
    </location>
</feature>
<feature type="active site" description="Proton donor/acceptor" evidence="1">
    <location>
        <position position="196"/>
    </location>
</feature>
<feature type="active site" description="Proton acceptor" evidence="3">
    <location>
        <position position="303"/>
    </location>
</feature>
<feature type="binding site" evidence="3">
    <location>
        <position position="8"/>
    </location>
    <ligand>
        <name>Mg(2+)</name>
        <dbReference type="ChEBI" id="CHEBI:18420"/>
        <label>1</label>
    </ligand>
</feature>
<feature type="binding site" evidence="3">
    <location>
        <position position="47"/>
    </location>
    <ligand>
        <name>Mg(2+)</name>
        <dbReference type="ChEBI" id="CHEBI:18420"/>
        <label>1</label>
    </ligand>
</feature>
<feature type="binding site" evidence="3">
    <location>
        <position position="196"/>
    </location>
    <ligand>
        <name>Mg(2+)</name>
        <dbReference type="ChEBI" id="CHEBI:18420"/>
        <label>2</label>
    </ligand>
</feature>
<feature type="binding site" evidence="3">
    <location>
        <position position="198"/>
    </location>
    <ligand>
        <name>Mg(2+)</name>
        <dbReference type="ChEBI" id="CHEBI:18420"/>
        <label>2</label>
    </ligand>
</feature>
<feature type="binding site" evidence="3">
    <location>
        <position position="302"/>
    </location>
    <ligand>
        <name>Mg(2+)</name>
        <dbReference type="ChEBI" id="CHEBI:18420"/>
        <label>1</label>
    </ligand>
</feature>
<feature type="binding site" evidence="3">
    <location>
        <position position="303"/>
    </location>
    <ligand>
        <name>Mg(2+)</name>
        <dbReference type="ChEBI" id="CHEBI:18420"/>
        <label>2</label>
    </ligand>
</feature>
<feature type="binding site" evidence="4">
    <location>
        <position position="467"/>
    </location>
    <ligand>
        <name>Zn(2+)</name>
        <dbReference type="ChEBI" id="CHEBI:29105"/>
    </ligand>
</feature>
<feature type="binding site" evidence="4">
    <location>
        <position position="470"/>
    </location>
    <ligand>
        <name>Zn(2+)</name>
        <dbReference type="ChEBI" id="CHEBI:29105"/>
    </ligand>
</feature>
<feature type="binding site" evidence="4">
    <location>
        <position position="493"/>
    </location>
    <ligand>
        <name>Zn(2+)</name>
        <dbReference type="ChEBI" id="CHEBI:29105"/>
    </ligand>
</feature>
<feature type="binding site" evidence="4">
    <location>
        <position position="507"/>
    </location>
    <ligand>
        <name>Zn(2+)</name>
        <dbReference type="ChEBI" id="CHEBI:29105"/>
    </ligand>
</feature>
<feature type="site" description="Transition state stabilizer" evidence="1">
    <location>
        <position position="198"/>
    </location>
</feature>
<feature type="site" description="Important for catalytic activity" evidence="1">
    <location>
        <position position="276"/>
    </location>
</feature>
<feature type="site" description="Interaction with DNA substrate" evidence="1">
    <location>
        <position position="303"/>
    </location>
</feature>
<feature type="cross-link" description="Glycyl lysine isopeptide (Lys-Gly) (interchain with G-Cter in ubiquitin)" evidence="2">
    <location>
        <position position="370"/>
    </location>
</feature>
<feature type="splice variant" id="VSP_015346" description="In isoform 2." evidence="11">
    <original>S</original>
    <variation>SECSCPSP</variation>
    <location>
        <position position="79"/>
    </location>
</feature>
<feature type="splice variant" id="VSP_015347" description="In isoform 4." evidence="11">
    <original>ECFEEDPGRKWMDGLLSNPGDEAGPHIGLFMDSYRYLHPKQQRAFTCWSVVSGA</original>
    <variation>LPVAACGHTNLVPEWEAGPVWERTMREIMEGFCDLLHSVRIFHHHTASLLRPSY</variation>
    <location>
        <begin position="213"/>
        <end position="266"/>
    </location>
</feature>
<feature type="splice variant" id="VSP_015348" description="In isoform 5." evidence="11">
    <original>ECFEEDPGRKWMDGLLSNPGDEAGPHIGLFMDSYRYLHPKQQRAFTCW</original>
    <variation>LPVAACGHTNLVPEWEAGPVWERTMREIMEVKTRFCSRPLKFTESPCL</variation>
    <location>
        <begin position="213"/>
        <end position="260"/>
    </location>
</feature>
<feature type="splice variant" id="VSP_015349" description="In isoform 3." evidence="10">
    <original>ECFEEDPGRKWMDGLLSNPGDEAGPHIGLFMDSY</original>
    <variation>VRFPLNHRPQFCSVHPASQNWEFGTRGSFFYGKK</variation>
    <location>
        <begin position="213"/>
        <end position="246"/>
    </location>
</feature>
<feature type="splice variant" id="VSP_015350" description="In isoform 3." evidence="10">
    <location>
        <begin position="247"/>
        <end position="516"/>
    </location>
</feature>
<feature type="splice variant" id="VSP_015351" description="In isoform 5." evidence="11">
    <location>
        <begin position="261"/>
        <end position="516"/>
    </location>
</feature>
<feature type="splice variant" id="VSP_015352" description="In isoform 4." evidence="11">
    <location>
        <begin position="267"/>
        <end position="516"/>
    </location>
</feature>
<feature type="sequence conflict" description="In Ref. 2; BAC38077." evidence="11" ref="2">
    <original>G</original>
    <variation>S</variation>
    <location>
        <position position="110"/>
    </location>
</feature>
<feature type="sequence conflict" description="In Ref. 2; BAB32346." evidence="11" ref="2">
    <original>A</original>
    <variation>P</variation>
    <location>
        <position position="183"/>
    </location>
</feature>
<feature type="sequence conflict" description="In Ref. 3; AAH78633." evidence="11" ref="3">
    <original>C</original>
    <variation>F</variation>
    <location>
        <position position="372"/>
    </location>
</feature>
<feature type="sequence conflict" description="In Ref. 3; AAH78633." evidence="11" ref="3">
    <original>V</original>
    <variation>M</variation>
    <location>
        <position position="433"/>
    </location>
</feature>
<sequence length="516" mass="57340">MLRVVSWNINGIRSPLQGLACQEPSSCPTALRRVLDELDADIVCLQETKVTRDVLTEPLAIVEGYNSYFSFSRSRSGYSGVATFCKDSATPVAAEEGLSGVFATLNGDIGCYGNMDEFTQEELRVLDSEGRALLTQHKIRTLEGKEKTLTLINVYCPHADPGKPERLTFKMRFYRLLQMRAEALLAAGSHVIILGDLNTAHRPIDHCDASSLECFEEDPGRKWMDGLLSNPGDEAGPHIGLFMDSYRYLHPKQQRAFTCWSVVSGARHLNYGSRLDYVLGDRALVIDTFQASFLLPEVMGSDHCPVGAVLNVSCVPAKQCPALCTRFLPEFAGTQLKILRFLVPLEQEPVREQQVLQPSHQIQAQRQPRKACMHSTRLRKSQGGPKRKQKNLMSYFQPSSSLSQTSGVELPTLPLVGPLTTPKTAEEVATATVLEEKNKVPESKDEKGERTAFWKSMLSGPSPMPLCGGHREPCVMRTVKKTGPNFGRQFYMCARPRGPPSDPSSRCNFFLWSRPS</sequence>
<comment type="function">
    <text evidence="2 6 7 8 9">Functions as a weak apurinic/apyrimidinic (AP) endodeoxyribonuclease in the DNA base excision repair (BER) pathway of DNA lesions induced by oxidative and alkylating agents (By similarity). Initiates repair of AP sites in DNA by catalyzing hydrolytic incision of the phosphodiester backbone immediately adjacent to the damage, generating a single-strand break with 5'-deoxyribose phosphate and 3'-hydroxyl ends (By similarity). Also displays double-stranded DNA 3'-5' exonuclease, 3'-phosphodiesterase activities. Shows robust 3'-5' exonuclease activity on 3'-recessed heteroduplex DNA and is able to remove mismatched nucleotides preferentially (By similarity). Shows fairly strong 3'-phosphodiesterase activity involved in the removal of 3'-damaged termini formed in DNA by oxidative agents. In the nucleus functions in the PCNA-dependent BER pathway (By similarity). Plays a role in reversing blocked 3' DNA ends, problematic lesions that preclude DNA synthesis (By similarity). Required for somatic hypermutation (SHM) and DNA cleavage step of class switch recombination (CSR) of immunoglobulin genes (PubMed:18025127, PubMed:19556307). Required for proper cell cycle progression during proliferation of peripheral lymphocytes (PubMed:15319281).</text>
</comment>
<comment type="catalytic activity">
    <reaction evidence="2">
        <text>Exonucleolytic cleavage in the 3'- to 5'-direction to yield nucleoside 5'-phosphates.</text>
        <dbReference type="EC" id="3.1.11.2"/>
    </reaction>
</comment>
<comment type="cofactor">
    <cofactor evidence="1">
        <name>Mg(2+)</name>
        <dbReference type="ChEBI" id="CHEBI:18420"/>
    </cofactor>
    <cofactor evidence="1">
        <name>Mn(2+)</name>
        <dbReference type="ChEBI" id="CHEBI:29035"/>
    </cofactor>
    <text evidence="1">Probably binds two magnesium or manganese ions per subunit.</text>
</comment>
<comment type="activity regulation">
    <text evidence="2">3'-5' exonuclease activity is activated by sodium and manganese (By similarity). 3'-5' exonuclease and 3'-phosphodiesterase activities are stimulated in presence of PCNA (By similarity).</text>
</comment>
<comment type="subunit">
    <text evidence="2 6">Interacts with PCNA (PubMed:12573260). This interaction is increased by misincorporation of uracil in nuclear DNA (By similarity).</text>
</comment>
<comment type="subcellular location">
    <subcellularLocation>
        <location evidence="6">Nucleus</location>
    </subcellularLocation>
    <subcellularLocation>
        <location evidence="6">Cytoplasm</location>
    </subcellularLocation>
    <subcellularLocation>
        <location evidence="6">Mitochondrion</location>
    </subcellularLocation>
    <text evidence="2">Together with PCNA, is redistributed in discrete nuclear foci in presence of oxidative DNA damaging agents.</text>
</comment>
<comment type="alternative products">
    <event type="alternative splicing"/>
    <isoform>
        <id>Q68G58-1</id>
        <name>1</name>
        <sequence type="displayed"/>
    </isoform>
    <isoform>
        <id>Q68G58-2</id>
        <name>2</name>
        <sequence type="described" ref="VSP_015346"/>
    </isoform>
    <isoform>
        <id>Q68G58-3</id>
        <name>3</name>
        <sequence type="described" ref="VSP_015349 VSP_015350"/>
    </isoform>
    <isoform>
        <id>Q68G58-4</id>
        <name>4</name>
        <sequence type="described" ref="VSP_015347 VSP_015352"/>
    </isoform>
    <isoform>
        <id>Q68G58-5</id>
        <name>5</name>
        <sequence type="described" ref="VSP_015348 VSP_015351"/>
    </isoform>
</comment>
<comment type="tissue specificity">
    <text evidence="6 7">Expressed in lymphocytes, thymocytes and splenocytes (at protein level). Highly expressed in the thymus and weakly expressed in the bone marrow, spleen, eye, kidney, lung, brain and uterus.</text>
</comment>
<comment type="induction">
    <text evidence="8">Up-regulated in both the nucleus and the cytosol of B cells stimulated to switch.</text>
</comment>
<comment type="domain">
    <text evidence="2">The PCNA interacting protein (PIP) box mediates interaction with PCNA and recruitment to DNA single-strand breaks.</text>
</comment>
<comment type="PTM">
    <text evidence="2">Ubiquitinated by the CUL9-RBX1 complex. Ubiquitinated by MKRN3 at Lys-370 leading to proteasomal degradation.</text>
</comment>
<comment type="disruption phenotype">
    <text evidence="7 8">Mice show abnormalities in proliferating haemopoietic organs, such as dyshematopoiesis, defect in lymphopoiesis, and delayed S-phase and G2/M-phase arrest.</text>
</comment>
<comment type="similarity">
    <text evidence="11">Belongs to the DNA repair enzymes AP/ExoA family.</text>
</comment>